<feature type="signal peptide" description="Tat-type signal" evidence="2">
    <location>
        <begin position="1"/>
        <end position="33"/>
    </location>
</feature>
<feature type="chain" id="PRO_5000205145" description="Glycosyl hydrolase family 109 protein">
    <location>
        <begin position="34"/>
        <end position="455"/>
    </location>
</feature>
<feature type="binding site" evidence="1">
    <location>
        <begin position="62"/>
        <end position="63"/>
    </location>
    <ligand>
        <name>NAD(+)</name>
        <dbReference type="ChEBI" id="CHEBI:57540"/>
    </ligand>
</feature>
<feature type="binding site" evidence="1">
    <location>
        <position position="84"/>
    </location>
    <ligand>
        <name>NAD(+)</name>
        <dbReference type="ChEBI" id="CHEBI:57540"/>
    </ligand>
</feature>
<feature type="binding site" evidence="1">
    <location>
        <position position="112"/>
    </location>
    <ligand>
        <name>NAD(+)</name>
        <dbReference type="ChEBI" id="CHEBI:57540"/>
    </ligand>
</feature>
<feature type="binding site" evidence="1">
    <location>
        <begin position="133"/>
        <end position="136"/>
    </location>
    <ligand>
        <name>NAD(+)</name>
        <dbReference type="ChEBI" id="CHEBI:57540"/>
    </ligand>
</feature>
<feature type="binding site" evidence="1">
    <location>
        <begin position="153"/>
        <end position="154"/>
    </location>
    <ligand>
        <name>NAD(+)</name>
        <dbReference type="ChEBI" id="CHEBI:57540"/>
    </ligand>
</feature>
<feature type="binding site" evidence="1">
    <location>
        <position position="182"/>
    </location>
    <ligand>
        <name>NAD(+)</name>
        <dbReference type="ChEBI" id="CHEBI:57540"/>
    </ligand>
</feature>
<feature type="binding site" evidence="1">
    <location>
        <position position="211"/>
    </location>
    <ligand>
        <name>substrate</name>
    </ligand>
</feature>
<feature type="binding site" evidence="1">
    <location>
        <position position="230"/>
    </location>
    <ligand>
        <name>substrate</name>
    </ligand>
</feature>
<feature type="binding site" evidence="1">
    <location>
        <begin position="242"/>
        <end position="245"/>
    </location>
    <ligand>
        <name>substrate</name>
    </ligand>
</feature>
<feature type="binding site" evidence="1">
    <location>
        <position position="242"/>
    </location>
    <ligand>
        <name>NAD(+)</name>
        <dbReference type="ChEBI" id="CHEBI:57540"/>
    </ligand>
</feature>
<feature type="binding site" evidence="1">
    <location>
        <position position="324"/>
    </location>
    <ligand>
        <name>substrate</name>
    </ligand>
</feature>
<evidence type="ECO:0000250" key="1"/>
<evidence type="ECO:0000255" key="2">
    <source>
        <dbReference type="PROSITE-ProRule" id="PRU00648"/>
    </source>
</evidence>
<evidence type="ECO:0000305" key="3"/>
<name>GH109_SHEAM</name>
<proteinExistence type="inferred from homology"/>
<gene>
    <name type="ordered locus">Sama_1194</name>
</gene>
<protein>
    <recommendedName>
        <fullName>Glycosyl hydrolase family 109 protein</fullName>
        <ecNumber>3.2.1.-</ecNumber>
    </recommendedName>
</protein>
<dbReference type="EC" id="3.2.1.-"/>
<dbReference type="EMBL" id="CP000507">
    <property type="protein sequence ID" value="ABL99401.1"/>
    <property type="molecule type" value="Genomic_DNA"/>
</dbReference>
<dbReference type="RefSeq" id="WP_011759310.1">
    <property type="nucleotide sequence ID" value="NC_008700.1"/>
</dbReference>
<dbReference type="SMR" id="A1S4U5"/>
<dbReference type="STRING" id="326297.Sama_1194"/>
<dbReference type="CAZy" id="GH109">
    <property type="family name" value="Glycoside Hydrolase Family 109"/>
</dbReference>
<dbReference type="KEGG" id="saz:Sama_1194"/>
<dbReference type="eggNOG" id="COG0673">
    <property type="taxonomic scope" value="Bacteria"/>
</dbReference>
<dbReference type="HOGENOM" id="CLU_046965_0_0_6"/>
<dbReference type="OrthoDB" id="9792935at2"/>
<dbReference type="Proteomes" id="UP000009175">
    <property type="component" value="Chromosome"/>
</dbReference>
<dbReference type="GO" id="GO:0016798">
    <property type="term" value="F:hydrolase activity, acting on glycosyl bonds"/>
    <property type="evidence" value="ECO:0007669"/>
    <property type="project" value="UniProtKB-KW"/>
</dbReference>
<dbReference type="GO" id="GO:0000166">
    <property type="term" value="F:nucleotide binding"/>
    <property type="evidence" value="ECO:0007669"/>
    <property type="project" value="InterPro"/>
</dbReference>
<dbReference type="Gene3D" id="3.30.360.10">
    <property type="entry name" value="Dihydrodipicolinate Reductase, domain 2"/>
    <property type="match status" value="1"/>
</dbReference>
<dbReference type="Gene3D" id="3.40.50.720">
    <property type="entry name" value="NAD(P)-binding Rossmann-like Domain"/>
    <property type="match status" value="1"/>
</dbReference>
<dbReference type="InterPro" id="IPR000683">
    <property type="entry name" value="Gfo/Idh/MocA-like_OxRdtase_N"/>
</dbReference>
<dbReference type="InterPro" id="IPR050463">
    <property type="entry name" value="Gfo/Idh/MocA_oxidrdct_glycsds"/>
</dbReference>
<dbReference type="InterPro" id="IPR049303">
    <property type="entry name" value="Glyco_hydro_109_C"/>
</dbReference>
<dbReference type="InterPro" id="IPR036291">
    <property type="entry name" value="NAD(P)-bd_dom_sf"/>
</dbReference>
<dbReference type="InterPro" id="IPR006311">
    <property type="entry name" value="TAT_signal"/>
</dbReference>
<dbReference type="InterPro" id="IPR019546">
    <property type="entry name" value="TAT_signal_bac_arc"/>
</dbReference>
<dbReference type="NCBIfam" id="TIGR01409">
    <property type="entry name" value="TAT_signal_seq"/>
    <property type="match status" value="1"/>
</dbReference>
<dbReference type="PANTHER" id="PTHR43818">
    <property type="entry name" value="BCDNA.GH03377"/>
    <property type="match status" value="1"/>
</dbReference>
<dbReference type="PANTHER" id="PTHR43818:SF1">
    <property type="entry name" value="GLYCOSYL HYDROLASE FAMILY 109 PROTEIN"/>
    <property type="match status" value="1"/>
</dbReference>
<dbReference type="Pfam" id="PF01408">
    <property type="entry name" value="GFO_IDH_MocA"/>
    <property type="match status" value="1"/>
</dbReference>
<dbReference type="Pfam" id="PF21252">
    <property type="entry name" value="Glyco_hydro_109_C"/>
    <property type="match status" value="1"/>
</dbReference>
<dbReference type="SUPFAM" id="SSF51735">
    <property type="entry name" value="NAD(P)-binding Rossmann-fold domains"/>
    <property type="match status" value="1"/>
</dbReference>
<dbReference type="PROSITE" id="PS51318">
    <property type="entry name" value="TAT"/>
    <property type="match status" value="1"/>
</dbReference>
<organism>
    <name type="scientific">Shewanella amazonensis (strain ATCC BAA-1098 / SB2B)</name>
    <dbReference type="NCBI Taxonomy" id="326297"/>
    <lineage>
        <taxon>Bacteria</taxon>
        <taxon>Pseudomonadati</taxon>
        <taxon>Pseudomonadota</taxon>
        <taxon>Gammaproteobacteria</taxon>
        <taxon>Alteromonadales</taxon>
        <taxon>Shewanellaceae</taxon>
        <taxon>Shewanella</taxon>
    </lineage>
</organism>
<keyword id="KW-0326">Glycosidase</keyword>
<keyword id="KW-0378">Hydrolase</keyword>
<keyword id="KW-0520">NAD</keyword>
<keyword id="KW-1185">Reference proteome</keyword>
<keyword id="KW-0732">Signal</keyword>
<comment type="function">
    <text evidence="1">Glycosidase.</text>
</comment>
<comment type="cofactor">
    <cofactor evidence="1">
        <name>NAD(+)</name>
        <dbReference type="ChEBI" id="CHEBI:57540"/>
    </cofactor>
    <text evidence="1">Binds 1 NAD(+) per subunit. The NAD(+) cannot dissociate.</text>
</comment>
<comment type="PTM">
    <text>Predicted to be exported by the Tat system. The position of the signal peptide cleavage has not been experimentally proven.</text>
</comment>
<comment type="similarity">
    <text evidence="3">Belongs to the Gfo/Idh/MocA family. Glycosyl hydrolase 109 subfamily.</text>
</comment>
<sequence length="455" mass="50618">MAGIDRRGFLKASMASVAAAALAGCASQQGTSATPKAAGKSVMGLVVPKMAEVRVGLIGVGERGVGFIHHFNNIEGARITAICDTDPLVISRAQKIMADYGRSQPAYYSKGQQAYLDLVAREDVDIVVIATPWALHHPMAKAAMLAGKHAFVEVPMGMTIEELWDLVDTAELTQRNCMMMENVCYGRDELMVLNMVRQGLFGELLHGEAAYIHELRWQMKELDRKTGSWRTGYHAQINGNLYPTHGLGPVAQYMNINRGDRFDYLSSMSSPALGRAAYAQREFPKDHQRNQLNYICGDMNTSLIKTVKGRTIMVQHDTTTPRPYSRHNLIQGTNGVFAGFPNRIALENHGRGSFHEWDQDMEHWYGKYDHPLWTRMGREAEQNGGHGGMDFLMCWRMIYCLRNGEPLDQDVYDGAAWSAVQPLSAASVADRGNSRDFPDFTRGVWQSATPLGIVE</sequence>
<reference key="1">
    <citation type="submission" date="2006-12" db="EMBL/GenBank/DDBJ databases">
        <title>Complete sequence of Shewanella amazonensis SB2B.</title>
        <authorList>
            <consortium name="US DOE Joint Genome Institute"/>
            <person name="Copeland A."/>
            <person name="Lucas S."/>
            <person name="Lapidus A."/>
            <person name="Barry K."/>
            <person name="Detter J.C."/>
            <person name="Glavina del Rio T."/>
            <person name="Hammon N."/>
            <person name="Israni S."/>
            <person name="Dalin E."/>
            <person name="Tice H."/>
            <person name="Pitluck S."/>
            <person name="Munk A.C."/>
            <person name="Brettin T."/>
            <person name="Bruce D."/>
            <person name="Han C."/>
            <person name="Tapia R."/>
            <person name="Gilna P."/>
            <person name="Schmutz J."/>
            <person name="Larimer F."/>
            <person name="Land M."/>
            <person name="Hauser L."/>
            <person name="Kyrpides N."/>
            <person name="Mikhailova N."/>
            <person name="Fredrickson J."/>
            <person name="Richardson P."/>
        </authorList>
    </citation>
    <scope>NUCLEOTIDE SEQUENCE [LARGE SCALE GENOMIC DNA]</scope>
    <source>
        <strain>ATCC BAA-1098 / SB2B</strain>
    </source>
</reference>
<accession>A1S4U5</accession>